<keyword id="KW-0067">ATP-binding</keyword>
<keyword id="KW-0436">Ligase</keyword>
<keyword id="KW-0460">Magnesium</keyword>
<keyword id="KW-0479">Metal-binding</keyword>
<keyword id="KW-0547">Nucleotide-binding</keyword>
<keyword id="KW-0658">Purine biosynthesis</keyword>
<comment type="function">
    <text evidence="1">Involved in the de novo purine biosynthesis. Catalyzes the transfer of formate to 5-phospho-ribosyl-glycinamide (GAR), producing 5-phospho-ribosyl-N-formylglycinamide (FGAR). Formate is provided by PurU via hydrolysis of 10-formyl-tetrahydrofolate.</text>
</comment>
<comment type="catalytic activity">
    <reaction evidence="1">
        <text>N(1)-(5-phospho-beta-D-ribosyl)glycinamide + formate + ATP = N(2)-formyl-N(1)-(5-phospho-beta-D-ribosyl)glycinamide + ADP + phosphate + H(+)</text>
        <dbReference type="Rhea" id="RHEA:24829"/>
        <dbReference type="ChEBI" id="CHEBI:15378"/>
        <dbReference type="ChEBI" id="CHEBI:15740"/>
        <dbReference type="ChEBI" id="CHEBI:30616"/>
        <dbReference type="ChEBI" id="CHEBI:43474"/>
        <dbReference type="ChEBI" id="CHEBI:143788"/>
        <dbReference type="ChEBI" id="CHEBI:147286"/>
        <dbReference type="ChEBI" id="CHEBI:456216"/>
        <dbReference type="EC" id="6.3.1.21"/>
    </reaction>
    <physiologicalReaction direction="left-to-right" evidence="1">
        <dbReference type="Rhea" id="RHEA:24830"/>
    </physiologicalReaction>
</comment>
<comment type="pathway">
    <text evidence="1">Purine metabolism; IMP biosynthesis via de novo pathway; N(2)-formyl-N(1)-(5-phospho-D-ribosyl)glycinamide from N(1)-(5-phospho-D-ribosyl)glycinamide (formate route): step 1/1.</text>
</comment>
<comment type="subunit">
    <text evidence="1">Homodimer.</text>
</comment>
<comment type="similarity">
    <text evidence="1">Belongs to the PurK/PurT family.</text>
</comment>
<accession>Q7V179</accession>
<dbReference type="EC" id="6.3.1.21" evidence="1"/>
<dbReference type="EMBL" id="BX548174">
    <property type="protein sequence ID" value="CAE19463.1"/>
    <property type="molecule type" value="Genomic_DNA"/>
</dbReference>
<dbReference type="RefSeq" id="WP_011132636.1">
    <property type="nucleotide sequence ID" value="NC_005072.1"/>
</dbReference>
<dbReference type="SMR" id="Q7V179"/>
<dbReference type="STRING" id="59919.PMM1004"/>
<dbReference type="KEGG" id="pmm:PMM1004"/>
<dbReference type="eggNOG" id="COG0027">
    <property type="taxonomic scope" value="Bacteria"/>
</dbReference>
<dbReference type="HOGENOM" id="CLU_011534_1_3_3"/>
<dbReference type="OrthoDB" id="9804625at2"/>
<dbReference type="UniPathway" id="UPA00074">
    <property type="reaction ID" value="UER00127"/>
</dbReference>
<dbReference type="Proteomes" id="UP000001026">
    <property type="component" value="Chromosome"/>
</dbReference>
<dbReference type="GO" id="GO:0005829">
    <property type="term" value="C:cytosol"/>
    <property type="evidence" value="ECO:0007669"/>
    <property type="project" value="TreeGrafter"/>
</dbReference>
<dbReference type="GO" id="GO:0005524">
    <property type="term" value="F:ATP binding"/>
    <property type="evidence" value="ECO:0007669"/>
    <property type="project" value="UniProtKB-UniRule"/>
</dbReference>
<dbReference type="GO" id="GO:0000287">
    <property type="term" value="F:magnesium ion binding"/>
    <property type="evidence" value="ECO:0007669"/>
    <property type="project" value="InterPro"/>
</dbReference>
<dbReference type="GO" id="GO:0043815">
    <property type="term" value="F:phosphoribosylglycinamide formyltransferase 2 activity"/>
    <property type="evidence" value="ECO:0007669"/>
    <property type="project" value="UniProtKB-UniRule"/>
</dbReference>
<dbReference type="GO" id="GO:0004644">
    <property type="term" value="F:phosphoribosylglycinamide formyltransferase activity"/>
    <property type="evidence" value="ECO:0007669"/>
    <property type="project" value="InterPro"/>
</dbReference>
<dbReference type="GO" id="GO:0006189">
    <property type="term" value="P:'de novo' IMP biosynthetic process"/>
    <property type="evidence" value="ECO:0007669"/>
    <property type="project" value="UniProtKB-UniRule"/>
</dbReference>
<dbReference type="Gene3D" id="3.40.50.20">
    <property type="match status" value="1"/>
</dbReference>
<dbReference type="Gene3D" id="3.30.1490.20">
    <property type="entry name" value="ATP-grasp fold, A domain"/>
    <property type="match status" value="1"/>
</dbReference>
<dbReference type="Gene3D" id="3.30.470.20">
    <property type="entry name" value="ATP-grasp fold, B domain"/>
    <property type="match status" value="1"/>
</dbReference>
<dbReference type="HAMAP" id="MF_01643">
    <property type="entry name" value="PurT"/>
    <property type="match status" value="1"/>
</dbReference>
<dbReference type="InterPro" id="IPR011761">
    <property type="entry name" value="ATP-grasp"/>
</dbReference>
<dbReference type="InterPro" id="IPR003135">
    <property type="entry name" value="ATP-grasp_carboxylate-amine"/>
</dbReference>
<dbReference type="InterPro" id="IPR013815">
    <property type="entry name" value="ATP_grasp_subdomain_1"/>
</dbReference>
<dbReference type="InterPro" id="IPR016185">
    <property type="entry name" value="PreATP-grasp_dom_sf"/>
</dbReference>
<dbReference type="InterPro" id="IPR005862">
    <property type="entry name" value="PurT"/>
</dbReference>
<dbReference type="InterPro" id="IPR054350">
    <property type="entry name" value="PurT/PurK_preATP-grasp"/>
</dbReference>
<dbReference type="InterPro" id="IPR048740">
    <property type="entry name" value="PurT_C"/>
</dbReference>
<dbReference type="InterPro" id="IPR011054">
    <property type="entry name" value="Rudment_hybrid_motif"/>
</dbReference>
<dbReference type="NCBIfam" id="NF006766">
    <property type="entry name" value="PRK09288.1"/>
    <property type="match status" value="1"/>
</dbReference>
<dbReference type="NCBIfam" id="TIGR01142">
    <property type="entry name" value="purT"/>
    <property type="match status" value="1"/>
</dbReference>
<dbReference type="PANTHER" id="PTHR43055">
    <property type="entry name" value="FORMATE-DEPENDENT PHOSPHORIBOSYLGLYCINAMIDE FORMYLTRANSFERASE"/>
    <property type="match status" value="1"/>
</dbReference>
<dbReference type="PANTHER" id="PTHR43055:SF1">
    <property type="entry name" value="FORMATE-DEPENDENT PHOSPHORIBOSYLGLYCINAMIDE FORMYLTRANSFERASE"/>
    <property type="match status" value="1"/>
</dbReference>
<dbReference type="Pfam" id="PF02222">
    <property type="entry name" value="ATP-grasp"/>
    <property type="match status" value="1"/>
</dbReference>
<dbReference type="Pfam" id="PF21244">
    <property type="entry name" value="PurT_C"/>
    <property type="match status" value="1"/>
</dbReference>
<dbReference type="Pfam" id="PF22660">
    <property type="entry name" value="RS_preATP-grasp-like"/>
    <property type="match status" value="1"/>
</dbReference>
<dbReference type="SUPFAM" id="SSF56059">
    <property type="entry name" value="Glutathione synthetase ATP-binding domain-like"/>
    <property type="match status" value="1"/>
</dbReference>
<dbReference type="SUPFAM" id="SSF52440">
    <property type="entry name" value="PreATP-grasp domain"/>
    <property type="match status" value="1"/>
</dbReference>
<dbReference type="SUPFAM" id="SSF51246">
    <property type="entry name" value="Rudiment single hybrid motif"/>
    <property type="match status" value="1"/>
</dbReference>
<dbReference type="PROSITE" id="PS50975">
    <property type="entry name" value="ATP_GRASP"/>
    <property type="match status" value="1"/>
</dbReference>
<reference key="1">
    <citation type="journal article" date="2003" name="Nature">
        <title>Genome divergence in two Prochlorococcus ecotypes reflects oceanic niche differentiation.</title>
        <authorList>
            <person name="Rocap G."/>
            <person name="Larimer F.W."/>
            <person name="Lamerdin J.E."/>
            <person name="Malfatti S."/>
            <person name="Chain P."/>
            <person name="Ahlgren N.A."/>
            <person name="Arellano A."/>
            <person name="Coleman M."/>
            <person name="Hauser L."/>
            <person name="Hess W.R."/>
            <person name="Johnson Z.I."/>
            <person name="Land M.L."/>
            <person name="Lindell D."/>
            <person name="Post A.F."/>
            <person name="Regala W."/>
            <person name="Shah M."/>
            <person name="Shaw S.L."/>
            <person name="Steglich C."/>
            <person name="Sullivan M.B."/>
            <person name="Ting C.S."/>
            <person name="Tolonen A."/>
            <person name="Webb E.A."/>
            <person name="Zinser E.R."/>
            <person name="Chisholm S.W."/>
        </authorList>
    </citation>
    <scope>NUCLEOTIDE SEQUENCE [LARGE SCALE GENOMIC DNA]</scope>
    <source>
        <strain>CCMP1986 / NIES-2087 / MED4</strain>
    </source>
</reference>
<feature type="chain" id="PRO_0000319207" description="Formate-dependent phosphoribosylglycinamide formyltransferase">
    <location>
        <begin position="1"/>
        <end position="390"/>
    </location>
</feature>
<feature type="domain" description="ATP-grasp" evidence="1">
    <location>
        <begin position="115"/>
        <end position="305"/>
    </location>
</feature>
<feature type="binding site" evidence="1">
    <location>
        <begin position="18"/>
        <end position="19"/>
    </location>
    <ligand>
        <name>N(1)-(5-phospho-beta-D-ribosyl)glycinamide</name>
        <dbReference type="ChEBI" id="CHEBI:143788"/>
    </ligand>
</feature>
<feature type="binding site" evidence="1">
    <location>
        <position position="78"/>
    </location>
    <ligand>
        <name>N(1)-(5-phospho-beta-D-ribosyl)glycinamide</name>
        <dbReference type="ChEBI" id="CHEBI:143788"/>
    </ligand>
</feature>
<feature type="binding site" evidence="1">
    <location>
        <position position="110"/>
    </location>
    <ligand>
        <name>ATP</name>
        <dbReference type="ChEBI" id="CHEBI:30616"/>
    </ligand>
</feature>
<feature type="binding site" evidence="1">
    <location>
        <position position="151"/>
    </location>
    <ligand>
        <name>ATP</name>
        <dbReference type="ChEBI" id="CHEBI:30616"/>
    </ligand>
</feature>
<feature type="binding site" evidence="1">
    <location>
        <begin position="156"/>
        <end position="161"/>
    </location>
    <ligand>
        <name>ATP</name>
        <dbReference type="ChEBI" id="CHEBI:30616"/>
    </ligand>
</feature>
<feature type="binding site" evidence="1">
    <location>
        <begin position="191"/>
        <end position="194"/>
    </location>
    <ligand>
        <name>ATP</name>
        <dbReference type="ChEBI" id="CHEBI:30616"/>
    </ligand>
</feature>
<feature type="binding site" evidence="1">
    <location>
        <position position="199"/>
    </location>
    <ligand>
        <name>ATP</name>
        <dbReference type="ChEBI" id="CHEBI:30616"/>
    </ligand>
</feature>
<feature type="binding site" evidence="1">
    <location>
        <position position="264"/>
    </location>
    <ligand>
        <name>Mg(2+)</name>
        <dbReference type="ChEBI" id="CHEBI:18420"/>
    </ligand>
</feature>
<feature type="binding site" evidence="1">
    <location>
        <position position="276"/>
    </location>
    <ligand>
        <name>Mg(2+)</name>
        <dbReference type="ChEBI" id="CHEBI:18420"/>
    </ligand>
</feature>
<feature type="binding site" evidence="1">
    <location>
        <position position="283"/>
    </location>
    <ligand>
        <name>N(1)-(5-phospho-beta-D-ribosyl)glycinamide</name>
        <dbReference type="ChEBI" id="CHEBI:143788"/>
    </ligand>
</feature>
<feature type="binding site" evidence="1">
    <location>
        <position position="353"/>
    </location>
    <ligand>
        <name>N(1)-(5-phospho-beta-D-ribosyl)glycinamide</name>
        <dbReference type="ChEBI" id="CHEBI:143788"/>
    </ligand>
</feature>
<feature type="binding site" evidence="1">
    <location>
        <begin position="360"/>
        <end position="361"/>
    </location>
    <ligand>
        <name>N(1)-(5-phospho-beta-D-ribosyl)glycinamide</name>
        <dbReference type="ChEBI" id="CHEBI:143788"/>
    </ligand>
</feature>
<evidence type="ECO:0000255" key="1">
    <source>
        <dbReference type="HAMAP-Rule" id="MF_01643"/>
    </source>
</evidence>
<proteinExistence type="inferred from homology"/>
<sequence>MSSFKFIPKKILLLGSGELGKELVVEAKRLGLEVIAIDKYENAPAMQLADNSFVIDMSDKEILKKKIKELNPDFVVPEIEALSIEALKELEDEGINIVPNARTVEITMNRDKIRDLASKELNIKTAKFSYVFNVDELEIKSSEIGFPLLIKPLMSSSGKGQSLVNRKEDLLLAWNDALKNSRGKIVGVILEEFLNFDYEFTLLTIRKTSGENIFCEPIGHEQYKGDYQCSWQPLDMNQSLINEARKMTTKILNNLNGSGIYGVEFFVRGKEVIFSELSPRPHDTGMVTLVSQNINEFELHLRAFLNLPIPNISLLKPSATRVIISDKESNTPSYSGLNEALELENTKVLIFGKPTAKKGRRMGVVLSTDDDLNIARENADKSALKIKIVS</sequence>
<organism>
    <name type="scientific">Prochlorococcus marinus subsp. pastoris (strain CCMP1986 / NIES-2087 / MED4)</name>
    <dbReference type="NCBI Taxonomy" id="59919"/>
    <lineage>
        <taxon>Bacteria</taxon>
        <taxon>Bacillati</taxon>
        <taxon>Cyanobacteriota</taxon>
        <taxon>Cyanophyceae</taxon>
        <taxon>Synechococcales</taxon>
        <taxon>Prochlorococcaceae</taxon>
        <taxon>Prochlorococcus</taxon>
    </lineage>
</organism>
<protein>
    <recommendedName>
        <fullName evidence="1">Formate-dependent phosphoribosylglycinamide formyltransferase</fullName>
        <ecNumber evidence="1">6.3.1.21</ecNumber>
    </recommendedName>
    <alternativeName>
        <fullName evidence="1">5'-phosphoribosylglycinamide transformylase 2</fullName>
    </alternativeName>
    <alternativeName>
        <fullName evidence="1">Formate-dependent GAR transformylase</fullName>
    </alternativeName>
    <alternativeName>
        <fullName evidence="1">GAR transformylase 2</fullName>
        <shortName evidence="1">GART 2</shortName>
    </alternativeName>
    <alternativeName>
        <fullName evidence="1">Non-folate glycinamide ribonucleotide transformylase</fullName>
    </alternativeName>
    <alternativeName>
        <fullName evidence="1">Phosphoribosylglycinamide formyltransferase 2</fullName>
    </alternativeName>
</protein>
<gene>
    <name evidence="1" type="primary">purT</name>
    <name type="ordered locus">PMM1004</name>
</gene>
<name>PURT_PROMP</name>